<sequence>MADLQATLDSIYADIQPRIGEGKVADYIPELAKVDPQQFGMAIVTVDGKVYRVGNADTAFSIQSISKVFMLTLALGKVGEGLWKRVGREPSGSAFNSIVQLEHESGIPRNPFINAGAIAVSDVVMAGHAPREAIGELLRFVRYLADDESITIDDKVARSETQTGYRNFALANFMRAYRNLDHPVDHVLGVYFHQCALSMSCEQLARAGLFLAARGSNPTTGHSVVSPKRARRINALMLTCGHYDGSGDFAYHVGLPGKSGVGGGIFAVAPGIASIAVWSPGLNKVGNSQLGAAALEMLAARTGWSVFGD</sequence>
<dbReference type="EC" id="3.5.1.2" evidence="1"/>
<dbReference type="EMBL" id="AM236080">
    <property type="protein sequence ID" value="CAK08111.1"/>
    <property type="molecule type" value="Genomic_DNA"/>
</dbReference>
<dbReference type="RefSeq" id="WP_011652167.1">
    <property type="nucleotide sequence ID" value="NC_008380.1"/>
</dbReference>
<dbReference type="SMR" id="Q1MG12"/>
<dbReference type="EnsemblBacteria" id="CAK08111">
    <property type="protein sequence ID" value="CAK08111"/>
    <property type="gene ID" value="RL2623"/>
</dbReference>
<dbReference type="KEGG" id="rle:RL2623"/>
<dbReference type="eggNOG" id="COG2066">
    <property type="taxonomic scope" value="Bacteria"/>
</dbReference>
<dbReference type="HOGENOM" id="CLU_027932_1_1_5"/>
<dbReference type="Proteomes" id="UP000006575">
    <property type="component" value="Chromosome"/>
</dbReference>
<dbReference type="GO" id="GO:0004359">
    <property type="term" value="F:glutaminase activity"/>
    <property type="evidence" value="ECO:0007669"/>
    <property type="project" value="UniProtKB-UniRule"/>
</dbReference>
<dbReference type="GO" id="GO:0006537">
    <property type="term" value="P:glutamate biosynthetic process"/>
    <property type="evidence" value="ECO:0007669"/>
    <property type="project" value="TreeGrafter"/>
</dbReference>
<dbReference type="GO" id="GO:0006543">
    <property type="term" value="P:glutamine catabolic process"/>
    <property type="evidence" value="ECO:0007669"/>
    <property type="project" value="TreeGrafter"/>
</dbReference>
<dbReference type="FunFam" id="3.40.710.10:FF:000005">
    <property type="entry name" value="Glutaminase"/>
    <property type="match status" value="1"/>
</dbReference>
<dbReference type="Gene3D" id="3.40.710.10">
    <property type="entry name" value="DD-peptidase/beta-lactamase superfamily"/>
    <property type="match status" value="1"/>
</dbReference>
<dbReference type="HAMAP" id="MF_00313">
    <property type="entry name" value="Glutaminase"/>
    <property type="match status" value="1"/>
</dbReference>
<dbReference type="InterPro" id="IPR012338">
    <property type="entry name" value="Beta-lactam/transpept-like"/>
</dbReference>
<dbReference type="InterPro" id="IPR015868">
    <property type="entry name" value="Glutaminase"/>
</dbReference>
<dbReference type="NCBIfam" id="TIGR03814">
    <property type="entry name" value="Gln_ase"/>
    <property type="match status" value="1"/>
</dbReference>
<dbReference type="NCBIfam" id="NF002132">
    <property type="entry name" value="PRK00971.1-1"/>
    <property type="match status" value="1"/>
</dbReference>
<dbReference type="NCBIfam" id="NF002133">
    <property type="entry name" value="PRK00971.1-2"/>
    <property type="match status" value="1"/>
</dbReference>
<dbReference type="PANTHER" id="PTHR12544">
    <property type="entry name" value="GLUTAMINASE"/>
    <property type="match status" value="1"/>
</dbReference>
<dbReference type="PANTHER" id="PTHR12544:SF29">
    <property type="entry name" value="GLUTAMINASE"/>
    <property type="match status" value="1"/>
</dbReference>
<dbReference type="Pfam" id="PF04960">
    <property type="entry name" value="Glutaminase"/>
    <property type="match status" value="1"/>
</dbReference>
<dbReference type="SUPFAM" id="SSF56601">
    <property type="entry name" value="beta-lactamase/transpeptidase-like"/>
    <property type="match status" value="1"/>
</dbReference>
<evidence type="ECO:0000255" key="1">
    <source>
        <dbReference type="HAMAP-Rule" id="MF_00313"/>
    </source>
</evidence>
<gene>
    <name evidence="1" type="primary">glsA</name>
    <name type="ordered locus">RL2623</name>
</gene>
<accession>Q1MG12</accession>
<keyword id="KW-0378">Hydrolase</keyword>
<feature type="chain" id="PRO_1000048348" description="Glutaminase">
    <location>
        <begin position="1"/>
        <end position="309"/>
    </location>
</feature>
<feature type="binding site" evidence="1">
    <location>
        <position position="64"/>
    </location>
    <ligand>
        <name>substrate</name>
    </ligand>
</feature>
<feature type="binding site" evidence="1">
    <location>
        <position position="114"/>
    </location>
    <ligand>
        <name>substrate</name>
    </ligand>
</feature>
<feature type="binding site" evidence="1">
    <location>
        <position position="160"/>
    </location>
    <ligand>
        <name>substrate</name>
    </ligand>
</feature>
<feature type="binding site" evidence="1">
    <location>
        <position position="167"/>
    </location>
    <ligand>
        <name>substrate</name>
    </ligand>
</feature>
<feature type="binding site" evidence="1">
    <location>
        <position position="191"/>
    </location>
    <ligand>
        <name>substrate</name>
    </ligand>
</feature>
<feature type="binding site" evidence="1">
    <location>
        <position position="243"/>
    </location>
    <ligand>
        <name>substrate</name>
    </ligand>
</feature>
<feature type="binding site" evidence="1">
    <location>
        <position position="261"/>
    </location>
    <ligand>
        <name>substrate</name>
    </ligand>
</feature>
<organism>
    <name type="scientific">Rhizobium johnstonii (strain DSM 114642 / LMG 32736 / 3841)</name>
    <name type="common">Rhizobium leguminosarum bv. viciae</name>
    <dbReference type="NCBI Taxonomy" id="216596"/>
    <lineage>
        <taxon>Bacteria</taxon>
        <taxon>Pseudomonadati</taxon>
        <taxon>Pseudomonadota</taxon>
        <taxon>Alphaproteobacteria</taxon>
        <taxon>Hyphomicrobiales</taxon>
        <taxon>Rhizobiaceae</taxon>
        <taxon>Rhizobium/Agrobacterium group</taxon>
        <taxon>Rhizobium</taxon>
        <taxon>Rhizobium johnstonii</taxon>
    </lineage>
</organism>
<comment type="catalytic activity">
    <reaction evidence="1">
        <text>L-glutamine + H2O = L-glutamate + NH4(+)</text>
        <dbReference type="Rhea" id="RHEA:15889"/>
        <dbReference type="ChEBI" id="CHEBI:15377"/>
        <dbReference type="ChEBI" id="CHEBI:28938"/>
        <dbReference type="ChEBI" id="CHEBI:29985"/>
        <dbReference type="ChEBI" id="CHEBI:58359"/>
        <dbReference type="EC" id="3.5.1.2"/>
    </reaction>
</comment>
<comment type="subunit">
    <text evidence="1">Homotetramer.</text>
</comment>
<comment type="similarity">
    <text evidence="1">Belongs to the glutaminase family.</text>
</comment>
<name>GLSA_RHIJ3</name>
<protein>
    <recommendedName>
        <fullName evidence="1">Glutaminase</fullName>
        <ecNumber evidence="1">3.5.1.2</ecNumber>
    </recommendedName>
</protein>
<reference key="1">
    <citation type="journal article" date="2006" name="Genome Biol.">
        <title>The genome of Rhizobium leguminosarum has recognizable core and accessory components.</title>
        <authorList>
            <person name="Young J.P.W."/>
            <person name="Crossman L.C."/>
            <person name="Johnston A.W.B."/>
            <person name="Thomson N.R."/>
            <person name="Ghazoui Z.F."/>
            <person name="Hull K.H."/>
            <person name="Wexler M."/>
            <person name="Curson A.R.J."/>
            <person name="Todd J.D."/>
            <person name="Poole P.S."/>
            <person name="Mauchline T.H."/>
            <person name="East A.K."/>
            <person name="Quail M.A."/>
            <person name="Churcher C."/>
            <person name="Arrowsmith C."/>
            <person name="Cherevach I."/>
            <person name="Chillingworth T."/>
            <person name="Clarke K."/>
            <person name="Cronin A."/>
            <person name="Davis P."/>
            <person name="Fraser A."/>
            <person name="Hance Z."/>
            <person name="Hauser H."/>
            <person name="Jagels K."/>
            <person name="Moule S."/>
            <person name="Mungall K."/>
            <person name="Norbertczak H."/>
            <person name="Rabbinowitsch E."/>
            <person name="Sanders M."/>
            <person name="Simmonds M."/>
            <person name="Whitehead S."/>
            <person name="Parkhill J."/>
        </authorList>
    </citation>
    <scope>NUCLEOTIDE SEQUENCE [LARGE SCALE GENOMIC DNA]</scope>
    <source>
        <strain>DSM 114642 / LMG 32736 / 3841</strain>
    </source>
</reference>
<proteinExistence type="inferred from homology"/>